<name>DNLJ_PROA2</name>
<dbReference type="EC" id="6.5.1.2" evidence="1"/>
<dbReference type="EMBL" id="CP001108">
    <property type="protein sequence ID" value="ACF45484.1"/>
    <property type="molecule type" value="Genomic_DNA"/>
</dbReference>
<dbReference type="RefSeq" id="WP_012505021.1">
    <property type="nucleotide sequence ID" value="NC_011059.1"/>
</dbReference>
<dbReference type="SMR" id="B4S4Y6"/>
<dbReference type="STRING" id="290512.Paes_0427"/>
<dbReference type="KEGG" id="paa:Paes_0427"/>
<dbReference type="eggNOG" id="COG0272">
    <property type="taxonomic scope" value="Bacteria"/>
</dbReference>
<dbReference type="HOGENOM" id="CLU_007764_2_1_10"/>
<dbReference type="Proteomes" id="UP000002725">
    <property type="component" value="Chromosome"/>
</dbReference>
<dbReference type="GO" id="GO:0005829">
    <property type="term" value="C:cytosol"/>
    <property type="evidence" value="ECO:0007669"/>
    <property type="project" value="TreeGrafter"/>
</dbReference>
<dbReference type="GO" id="GO:0003911">
    <property type="term" value="F:DNA ligase (NAD+) activity"/>
    <property type="evidence" value="ECO:0007669"/>
    <property type="project" value="UniProtKB-UniRule"/>
</dbReference>
<dbReference type="GO" id="GO:0046872">
    <property type="term" value="F:metal ion binding"/>
    <property type="evidence" value="ECO:0007669"/>
    <property type="project" value="UniProtKB-KW"/>
</dbReference>
<dbReference type="GO" id="GO:0006281">
    <property type="term" value="P:DNA repair"/>
    <property type="evidence" value="ECO:0007669"/>
    <property type="project" value="UniProtKB-KW"/>
</dbReference>
<dbReference type="GO" id="GO:0006260">
    <property type="term" value="P:DNA replication"/>
    <property type="evidence" value="ECO:0007669"/>
    <property type="project" value="UniProtKB-KW"/>
</dbReference>
<dbReference type="CDD" id="cd17748">
    <property type="entry name" value="BRCT_DNA_ligase_like"/>
    <property type="match status" value="1"/>
</dbReference>
<dbReference type="CDD" id="cd00114">
    <property type="entry name" value="LIGANc"/>
    <property type="match status" value="1"/>
</dbReference>
<dbReference type="FunFam" id="1.10.150.20:FF:000006">
    <property type="entry name" value="DNA ligase"/>
    <property type="match status" value="1"/>
</dbReference>
<dbReference type="FunFam" id="1.10.150.20:FF:000007">
    <property type="entry name" value="DNA ligase"/>
    <property type="match status" value="1"/>
</dbReference>
<dbReference type="FunFam" id="1.10.287.610:FF:000002">
    <property type="entry name" value="DNA ligase"/>
    <property type="match status" value="1"/>
</dbReference>
<dbReference type="FunFam" id="2.40.50.140:FF:000012">
    <property type="entry name" value="DNA ligase"/>
    <property type="match status" value="1"/>
</dbReference>
<dbReference type="Gene3D" id="6.20.10.30">
    <property type="match status" value="1"/>
</dbReference>
<dbReference type="Gene3D" id="1.10.150.20">
    <property type="entry name" value="5' to 3' exonuclease, C-terminal subdomain"/>
    <property type="match status" value="2"/>
</dbReference>
<dbReference type="Gene3D" id="3.40.50.10190">
    <property type="entry name" value="BRCT domain"/>
    <property type="match status" value="1"/>
</dbReference>
<dbReference type="Gene3D" id="3.30.470.30">
    <property type="entry name" value="DNA ligase/mRNA capping enzyme"/>
    <property type="match status" value="1"/>
</dbReference>
<dbReference type="Gene3D" id="1.10.287.610">
    <property type="entry name" value="Helix hairpin bin"/>
    <property type="match status" value="1"/>
</dbReference>
<dbReference type="Gene3D" id="2.40.50.140">
    <property type="entry name" value="Nucleic acid-binding proteins"/>
    <property type="match status" value="1"/>
</dbReference>
<dbReference type="HAMAP" id="MF_01588">
    <property type="entry name" value="DNA_ligase_A"/>
    <property type="match status" value="1"/>
</dbReference>
<dbReference type="InterPro" id="IPR001357">
    <property type="entry name" value="BRCT_dom"/>
</dbReference>
<dbReference type="InterPro" id="IPR036420">
    <property type="entry name" value="BRCT_dom_sf"/>
</dbReference>
<dbReference type="InterPro" id="IPR041663">
    <property type="entry name" value="DisA/LigA_HHH"/>
</dbReference>
<dbReference type="InterPro" id="IPR001679">
    <property type="entry name" value="DNA_ligase"/>
</dbReference>
<dbReference type="InterPro" id="IPR018239">
    <property type="entry name" value="DNA_ligase_AS"/>
</dbReference>
<dbReference type="InterPro" id="IPR013839">
    <property type="entry name" value="DNAligase_adenylation"/>
</dbReference>
<dbReference type="InterPro" id="IPR013840">
    <property type="entry name" value="DNAligase_N"/>
</dbReference>
<dbReference type="InterPro" id="IPR012340">
    <property type="entry name" value="NA-bd_OB-fold"/>
</dbReference>
<dbReference type="InterPro" id="IPR004150">
    <property type="entry name" value="NAD_DNA_ligase_OB"/>
</dbReference>
<dbReference type="InterPro" id="IPR010994">
    <property type="entry name" value="RuvA_2-like"/>
</dbReference>
<dbReference type="InterPro" id="IPR004149">
    <property type="entry name" value="Znf_DNAligase_C4"/>
</dbReference>
<dbReference type="NCBIfam" id="TIGR00575">
    <property type="entry name" value="dnlj"/>
    <property type="match status" value="1"/>
</dbReference>
<dbReference type="NCBIfam" id="NF005932">
    <property type="entry name" value="PRK07956.1"/>
    <property type="match status" value="1"/>
</dbReference>
<dbReference type="PANTHER" id="PTHR23389">
    <property type="entry name" value="CHROMOSOME TRANSMISSION FIDELITY FACTOR 18"/>
    <property type="match status" value="1"/>
</dbReference>
<dbReference type="PANTHER" id="PTHR23389:SF9">
    <property type="entry name" value="DNA LIGASE"/>
    <property type="match status" value="1"/>
</dbReference>
<dbReference type="Pfam" id="PF00533">
    <property type="entry name" value="BRCT"/>
    <property type="match status" value="1"/>
</dbReference>
<dbReference type="Pfam" id="PF01653">
    <property type="entry name" value="DNA_ligase_aden"/>
    <property type="match status" value="1"/>
</dbReference>
<dbReference type="Pfam" id="PF03120">
    <property type="entry name" value="DNA_ligase_OB"/>
    <property type="match status" value="1"/>
</dbReference>
<dbReference type="Pfam" id="PF03119">
    <property type="entry name" value="DNA_ligase_ZBD"/>
    <property type="match status" value="1"/>
</dbReference>
<dbReference type="Pfam" id="PF12826">
    <property type="entry name" value="HHH_2"/>
    <property type="match status" value="1"/>
</dbReference>
<dbReference type="PIRSF" id="PIRSF001604">
    <property type="entry name" value="LigA"/>
    <property type="match status" value="1"/>
</dbReference>
<dbReference type="SMART" id="SM00292">
    <property type="entry name" value="BRCT"/>
    <property type="match status" value="1"/>
</dbReference>
<dbReference type="SMART" id="SM00532">
    <property type="entry name" value="LIGANc"/>
    <property type="match status" value="1"/>
</dbReference>
<dbReference type="SUPFAM" id="SSF52113">
    <property type="entry name" value="BRCT domain"/>
    <property type="match status" value="1"/>
</dbReference>
<dbReference type="SUPFAM" id="SSF56091">
    <property type="entry name" value="DNA ligase/mRNA capping enzyme, catalytic domain"/>
    <property type="match status" value="1"/>
</dbReference>
<dbReference type="SUPFAM" id="SSF50249">
    <property type="entry name" value="Nucleic acid-binding proteins"/>
    <property type="match status" value="1"/>
</dbReference>
<dbReference type="SUPFAM" id="SSF47781">
    <property type="entry name" value="RuvA domain 2-like"/>
    <property type="match status" value="1"/>
</dbReference>
<dbReference type="PROSITE" id="PS50172">
    <property type="entry name" value="BRCT"/>
    <property type="match status" value="1"/>
</dbReference>
<dbReference type="PROSITE" id="PS01055">
    <property type="entry name" value="DNA_LIGASE_N1"/>
    <property type="match status" value="1"/>
</dbReference>
<evidence type="ECO:0000255" key="1">
    <source>
        <dbReference type="HAMAP-Rule" id="MF_01588"/>
    </source>
</evidence>
<accession>B4S4Y6</accession>
<sequence>MQRKDALKEIARLRDELNRHNYRYYVLAQPEISDYAFDQELERLIALEKAFPDLVTPDSPSQRVGGEITKEFPTVTHRQPMRSLSNTYSLEEVEEFYARVLKLLPEEAGENPEFVAELKFDGVAVSLLYRDGFLVQGATRGNGVEGDDITPNIRTIGSVPLQLRGGAAMAAEQYGGREIEVRGEVFMRKDDFAALNEGRPEEEQFANPRNATAGTLKLQDSAEVARRKMMFVAYYLTDPQCRSMQHVQRLQRLEEMGFYTGGHYSTCRSFDEIRDFIGRWEVDRLTLQYDIDGIVLKLNNPAFWDELGATSKSPRWAIAYKYPAEQAETVLNDVVFQVGRLGTITPVAELEAVRLAGTTVKRSTLHNFDEIRRLDVRIGDRVVIEKSGEIIPKVIRVVPGTRREDSSEIAIPSHCPVCGTALLHPENEVSWYCPNSQSCPAQVKARILHFASRNAMDIKSLGESLVEQLVHNGLVADSGDLYRLTADEVSHLDRMADKSAMNLLKAIEKSRTREYERVLYALGIRHVGLATARELAAAYHSIDLLASAALEELSCVADIGPVIAQSVHDFFRNPDALALVEKLRTAGLRLAASAPKALVNRNFEGMKVIFTGTLERHSRDDAAALVAQRGGKEVKSLSRKTDLVVAGKDPGSKLQKALKLGVRVIGEEEFEAMLF</sequence>
<reference key="1">
    <citation type="submission" date="2008-06" db="EMBL/GenBank/DDBJ databases">
        <title>Complete sequence of chromosome of Prosthecochloris aestuarii DSM 271.</title>
        <authorList>
            <consortium name="US DOE Joint Genome Institute"/>
            <person name="Lucas S."/>
            <person name="Copeland A."/>
            <person name="Lapidus A."/>
            <person name="Glavina del Rio T."/>
            <person name="Dalin E."/>
            <person name="Tice H."/>
            <person name="Bruce D."/>
            <person name="Goodwin L."/>
            <person name="Pitluck S."/>
            <person name="Schmutz J."/>
            <person name="Larimer F."/>
            <person name="Land M."/>
            <person name="Hauser L."/>
            <person name="Kyrpides N."/>
            <person name="Anderson I."/>
            <person name="Liu Z."/>
            <person name="Li T."/>
            <person name="Zhao F."/>
            <person name="Overmann J."/>
            <person name="Bryant D.A."/>
            <person name="Richardson P."/>
        </authorList>
    </citation>
    <scope>NUCLEOTIDE SEQUENCE [LARGE SCALE GENOMIC DNA]</scope>
    <source>
        <strain>DSM 271 / SK 413</strain>
    </source>
</reference>
<gene>
    <name evidence="1" type="primary">ligA</name>
    <name type="ordered locus">Paes_0427</name>
</gene>
<feature type="chain" id="PRO_0000380444" description="DNA ligase">
    <location>
        <begin position="1"/>
        <end position="675"/>
    </location>
</feature>
<feature type="domain" description="BRCT" evidence="1">
    <location>
        <begin position="598"/>
        <end position="675"/>
    </location>
</feature>
<feature type="active site" description="N6-AMP-lysine intermediate" evidence="1">
    <location>
        <position position="119"/>
    </location>
</feature>
<feature type="binding site" evidence="1">
    <location>
        <begin position="34"/>
        <end position="38"/>
    </location>
    <ligand>
        <name>NAD(+)</name>
        <dbReference type="ChEBI" id="CHEBI:57540"/>
    </ligand>
</feature>
<feature type="binding site" evidence="1">
    <location>
        <begin position="83"/>
        <end position="84"/>
    </location>
    <ligand>
        <name>NAD(+)</name>
        <dbReference type="ChEBI" id="CHEBI:57540"/>
    </ligand>
</feature>
<feature type="binding site" evidence="1">
    <location>
        <position position="117"/>
    </location>
    <ligand>
        <name>NAD(+)</name>
        <dbReference type="ChEBI" id="CHEBI:57540"/>
    </ligand>
</feature>
<feature type="binding site" evidence="1">
    <location>
        <position position="140"/>
    </location>
    <ligand>
        <name>NAD(+)</name>
        <dbReference type="ChEBI" id="CHEBI:57540"/>
    </ligand>
</feature>
<feature type="binding site" evidence="1">
    <location>
        <position position="184"/>
    </location>
    <ligand>
        <name>NAD(+)</name>
        <dbReference type="ChEBI" id="CHEBI:57540"/>
    </ligand>
</feature>
<feature type="binding site" evidence="1">
    <location>
        <position position="297"/>
    </location>
    <ligand>
        <name>NAD(+)</name>
        <dbReference type="ChEBI" id="CHEBI:57540"/>
    </ligand>
</feature>
<feature type="binding site" evidence="1">
    <location>
        <position position="321"/>
    </location>
    <ligand>
        <name>NAD(+)</name>
        <dbReference type="ChEBI" id="CHEBI:57540"/>
    </ligand>
</feature>
<feature type="binding site" evidence="1">
    <location>
        <position position="415"/>
    </location>
    <ligand>
        <name>Zn(2+)</name>
        <dbReference type="ChEBI" id="CHEBI:29105"/>
    </ligand>
</feature>
<feature type="binding site" evidence="1">
    <location>
        <position position="418"/>
    </location>
    <ligand>
        <name>Zn(2+)</name>
        <dbReference type="ChEBI" id="CHEBI:29105"/>
    </ligand>
</feature>
<feature type="binding site" evidence="1">
    <location>
        <position position="433"/>
    </location>
    <ligand>
        <name>Zn(2+)</name>
        <dbReference type="ChEBI" id="CHEBI:29105"/>
    </ligand>
</feature>
<feature type="binding site" evidence="1">
    <location>
        <position position="439"/>
    </location>
    <ligand>
        <name>Zn(2+)</name>
        <dbReference type="ChEBI" id="CHEBI:29105"/>
    </ligand>
</feature>
<keyword id="KW-0227">DNA damage</keyword>
<keyword id="KW-0234">DNA repair</keyword>
<keyword id="KW-0235">DNA replication</keyword>
<keyword id="KW-0436">Ligase</keyword>
<keyword id="KW-0460">Magnesium</keyword>
<keyword id="KW-0464">Manganese</keyword>
<keyword id="KW-0479">Metal-binding</keyword>
<keyword id="KW-0520">NAD</keyword>
<keyword id="KW-0862">Zinc</keyword>
<proteinExistence type="inferred from homology"/>
<organism>
    <name type="scientific">Prosthecochloris aestuarii (strain DSM 271 / SK 413)</name>
    <dbReference type="NCBI Taxonomy" id="290512"/>
    <lineage>
        <taxon>Bacteria</taxon>
        <taxon>Pseudomonadati</taxon>
        <taxon>Chlorobiota</taxon>
        <taxon>Chlorobiia</taxon>
        <taxon>Chlorobiales</taxon>
        <taxon>Chlorobiaceae</taxon>
        <taxon>Prosthecochloris</taxon>
    </lineage>
</organism>
<protein>
    <recommendedName>
        <fullName evidence="1">DNA ligase</fullName>
        <ecNumber evidence="1">6.5.1.2</ecNumber>
    </recommendedName>
    <alternativeName>
        <fullName evidence="1">Polydeoxyribonucleotide synthase [NAD(+)]</fullName>
    </alternativeName>
</protein>
<comment type="function">
    <text evidence="1">DNA ligase that catalyzes the formation of phosphodiester linkages between 5'-phosphoryl and 3'-hydroxyl groups in double-stranded DNA using NAD as a coenzyme and as the energy source for the reaction. It is essential for DNA replication and repair of damaged DNA.</text>
</comment>
<comment type="catalytic activity">
    <reaction evidence="1">
        <text>NAD(+) + (deoxyribonucleotide)n-3'-hydroxyl + 5'-phospho-(deoxyribonucleotide)m = (deoxyribonucleotide)n+m + AMP + beta-nicotinamide D-nucleotide.</text>
        <dbReference type="EC" id="6.5.1.2"/>
    </reaction>
</comment>
<comment type="cofactor">
    <cofactor evidence="1">
        <name>Mg(2+)</name>
        <dbReference type="ChEBI" id="CHEBI:18420"/>
    </cofactor>
    <cofactor evidence="1">
        <name>Mn(2+)</name>
        <dbReference type="ChEBI" id="CHEBI:29035"/>
    </cofactor>
</comment>
<comment type="similarity">
    <text evidence="1">Belongs to the NAD-dependent DNA ligase family. LigA subfamily.</text>
</comment>